<comment type="function">
    <text evidence="1">Exhibits a very high intrinsic GTPase hydrolysis rate. Involved in the addition of a carboxymethylaminomethyl (cmnm) group at the wobble position (U34) of certain tRNAs, forming tRNA-cmnm(5)s(2)U34.</text>
</comment>
<comment type="cofactor">
    <cofactor evidence="1">
        <name>K(+)</name>
        <dbReference type="ChEBI" id="CHEBI:29103"/>
    </cofactor>
    <text evidence="1">Binds 1 potassium ion per subunit.</text>
</comment>
<comment type="subunit">
    <text evidence="1">Homodimer. Heterotetramer of two MnmE and two MnmG subunits.</text>
</comment>
<comment type="subcellular location">
    <subcellularLocation>
        <location evidence="1">Cytoplasm</location>
    </subcellularLocation>
</comment>
<comment type="similarity">
    <text evidence="1">Belongs to the TRAFAC class TrmE-Era-EngA-EngB-Septin-like GTPase superfamily. TrmE GTPase family.</text>
</comment>
<protein>
    <recommendedName>
        <fullName evidence="1">tRNA modification GTPase MnmE</fullName>
        <ecNumber evidence="1">3.6.-.-</ecNumber>
    </recommendedName>
</protein>
<feature type="chain" id="PRO_1000080016" description="tRNA modification GTPase MnmE">
    <location>
        <begin position="1"/>
        <end position="453"/>
    </location>
</feature>
<feature type="domain" description="TrmE-type G">
    <location>
        <begin position="215"/>
        <end position="376"/>
    </location>
</feature>
<feature type="binding site" evidence="1">
    <location>
        <position position="22"/>
    </location>
    <ligand>
        <name>(6S)-5-formyl-5,6,7,8-tetrahydrofolate</name>
        <dbReference type="ChEBI" id="CHEBI:57457"/>
    </ligand>
</feature>
<feature type="binding site" evidence="1">
    <location>
        <position position="79"/>
    </location>
    <ligand>
        <name>(6S)-5-formyl-5,6,7,8-tetrahydrofolate</name>
        <dbReference type="ChEBI" id="CHEBI:57457"/>
    </ligand>
</feature>
<feature type="binding site" evidence="1">
    <location>
        <position position="119"/>
    </location>
    <ligand>
        <name>(6S)-5-formyl-5,6,7,8-tetrahydrofolate</name>
        <dbReference type="ChEBI" id="CHEBI:57457"/>
    </ligand>
</feature>
<feature type="binding site" evidence="1">
    <location>
        <begin position="225"/>
        <end position="230"/>
    </location>
    <ligand>
        <name>GTP</name>
        <dbReference type="ChEBI" id="CHEBI:37565"/>
    </ligand>
</feature>
<feature type="binding site" evidence="1">
    <location>
        <position position="225"/>
    </location>
    <ligand>
        <name>K(+)</name>
        <dbReference type="ChEBI" id="CHEBI:29103"/>
    </ligand>
</feature>
<feature type="binding site" evidence="1">
    <location>
        <position position="229"/>
    </location>
    <ligand>
        <name>Mg(2+)</name>
        <dbReference type="ChEBI" id="CHEBI:18420"/>
    </ligand>
</feature>
<feature type="binding site" evidence="1">
    <location>
        <begin position="244"/>
        <end position="250"/>
    </location>
    <ligand>
        <name>GTP</name>
        <dbReference type="ChEBI" id="CHEBI:37565"/>
    </ligand>
</feature>
<feature type="binding site" evidence="1">
    <location>
        <position position="244"/>
    </location>
    <ligand>
        <name>K(+)</name>
        <dbReference type="ChEBI" id="CHEBI:29103"/>
    </ligand>
</feature>
<feature type="binding site" evidence="1">
    <location>
        <position position="246"/>
    </location>
    <ligand>
        <name>K(+)</name>
        <dbReference type="ChEBI" id="CHEBI:29103"/>
    </ligand>
</feature>
<feature type="binding site" evidence="1">
    <location>
        <position position="249"/>
    </location>
    <ligand>
        <name>K(+)</name>
        <dbReference type="ChEBI" id="CHEBI:29103"/>
    </ligand>
</feature>
<feature type="binding site" evidence="1">
    <location>
        <position position="250"/>
    </location>
    <ligand>
        <name>Mg(2+)</name>
        <dbReference type="ChEBI" id="CHEBI:18420"/>
    </ligand>
</feature>
<feature type="binding site" evidence="1">
    <location>
        <begin position="269"/>
        <end position="272"/>
    </location>
    <ligand>
        <name>GTP</name>
        <dbReference type="ChEBI" id="CHEBI:37565"/>
    </ligand>
</feature>
<feature type="binding site" evidence="1">
    <location>
        <begin position="334"/>
        <end position="337"/>
    </location>
    <ligand>
        <name>GTP</name>
        <dbReference type="ChEBI" id="CHEBI:37565"/>
    </ligand>
</feature>
<feature type="binding site" evidence="1">
    <location>
        <position position="453"/>
    </location>
    <ligand>
        <name>(6S)-5-formyl-5,6,7,8-tetrahydrofolate</name>
        <dbReference type="ChEBI" id="CHEBI:57457"/>
    </ligand>
</feature>
<organism>
    <name type="scientific">Shewanella sediminis (strain HAW-EB3)</name>
    <dbReference type="NCBI Taxonomy" id="425104"/>
    <lineage>
        <taxon>Bacteria</taxon>
        <taxon>Pseudomonadati</taxon>
        <taxon>Pseudomonadota</taxon>
        <taxon>Gammaproteobacteria</taxon>
        <taxon>Alteromonadales</taxon>
        <taxon>Shewanellaceae</taxon>
        <taxon>Shewanella</taxon>
    </lineage>
</organism>
<proteinExistence type="inferred from homology"/>
<evidence type="ECO:0000255" key="1">
    <source>
        <dbReference type="HAMAP-Rule" id="MF_00379"/>
    </source>
</evidence>
<accession>A8FP41</accession>
<sequence length="453" mass="49259">MTTDTIVAQATAPGRGGVGIIRISGDQASEVAMALLGHIPKTRYADYCDFKDGEGEVIDQGIALYFQGPNSFTGEDVLELQGHGGQIVLDMLIKRVMEVEGIRIAKPGEFSEQAFMNDKLDLTQAEAIADLIDATSEQAAKSALNSLQGEFSTQVHELVDRVTNLRLYVEAAIDFPDEEVDFLSDGKIAGSLYRIITKLDSVQASAKQGAIIREGMKVVIAGRPNAGKSSLLNALAGKESAIVTEIAGTTRDVLREHIHLDGMPLHIIDTAGLRDTADTVEQIGIERAWAEIETADQVLFMVDGTTTDAVDPHEIWPDFIDRLPEKLGITVVRNKADITGEALTVTQDHGHNVFRISAKTGLGVEELQQHLKSLMGYQSNLEGGFIARRRHLEALELATSHLMIGKEQLEVYQAGELLAEELRMTQMALSEITGKFTSDDLLGKIFSSFCIGK</sequence>
<gene>
    <name evidence="1" type="primary">mnmE</name>
    <name evidence="1" type="synonym">trmE</name>
    <name type="ordered locus">Ssed_0001</name>
</gene>
<reference key="1">
    <citation type="submission" date="2007-08" db="EMBL/GenBank/DDBJ databases">
        <title>Complete sequence of Shewanella sediminis HAW-EB3.</title>
        <authorList>
            <consortium name="US DOE Joint Genome Institute"/>
            <person name="Copeland A."/>
            <person name="Lucas S."/>
            <person name="Lapidus A."/>
            <person name="Barry K."/>
            <person name="Glavina del Rio T."/>
            <person name="Dalin E."/>
            <person name="Tice H."/>
            <person name="Pitluck S."/>
            <person name="Chertkov O."/>
            <person name="Brettin T."/>
            <person name="Bruce D."/>
            <person name="Detter J.C."/>
            <person name="Han C."/>
            <person name="Schmutz J."/>
            <person name="Larimer F."/>
            <person name="Land M."/>
            <person name="Hauser L."/>
            <person name="Kyrpides N."/>
            <person name="Kim E."/>
            <person name="Zhao J.-S."/>
            <person name="Richardson P."/>
        </authorList>
    </citation>
    <scope>NUCLEOTIDE SEQUENCE [LARGE SCALE GENOMIC DNA]</scope>
    <source>
        <strain>HAW-EB3</strain>
    </source>
</reference>
<dbReference type="EC" id="3.6.-.-" evidence="1"/>
<dbReference type="EMBL" id="CP000821">
    <property type="protein sequence ID" value="ABV34614.1"/>
    <property type="molecule type" value="Genomic_DNA"/>
</dbReference>
<dbReference type="RefSeq" id="WP_012004141.1">
    <property type="nucleotide sequence ID" value="NC_009831.1"/>
</dbReference>
<dbReference type="SMR" id="A8FP41"/>
<dbReference type="STRING" id="425104.Ssed_0001"/>
<dbReference type="KEGG" id="sse:Ssed_0001"/>
<dbReference type="eggNOG" id="COG0486">
    <property type="taxonomic scope" value="Bacteria"/>
</dbReference>
<dbReference type="HOGENOM" id="CLU_019624_4_1_6"/>
<dbReference type="OrthoDB" id="9805918at2"/>
<dbReference type="Proteomes" id="UP000002015">
    <property type="component" value="Chromosome"/>
</dbReference>
<dbReference type="GO" id="GO:0005829">
    <property type="term" value="C:cytosol"/>
    <property type="evidence" value="ECO:0007669"/>
    <property type="project" value="TreeGrafter"/>
</dbReference>
<dbReference type="GO" id="GO:0005525">
    <property type="term" value="F:GTP binding"/>
    <property type="evidence" value="ECO:0007669"/>
    <property type="project" value="UniProtKB-UniRule"/>
</dbReference>
<dbReference type="GO" id="GO:0003924">
    <property type="term" value="F:GTPase activity"/>
    <property type="evidence" value="ECO:0007669"/>
    <property type="project" value="UniProtKB-UniRule"/>
</dbReference>
<dbReference type="GO" id="GO:0046872">
    <property type="term" value="F:metal ion binding"/>
    <property type="evidence" value="ECO:0007669"/>
    <property type="project" value="UniProtKB-KW"/>
</dbReference>
<dbReference type="GO" id="GO:0030488">
    <property type="term" value="P:tRNA methylation"/>
    <property type="evidence" value="ECO:0007669"/>
    <property type="project" value="TreeGrafter"/>
</dbReference>
<dbReference type="GO" id="GO:0002098">
    <property type="term" value="P:tRNA wobble uridine modification"/>
    <property type="evidence" value="ECO:0007669"/>
    <property type="project" value="TreeGrafter"/>
</dbReference>
<dbReference type="CDD" id="cd04164">
    <property type="entry name" value="trmE"/>
    <property type="match status" value="1"/>
</dbReference>
<dbReference type="CDD" id="cd14858">
    <property type="entry name" value="TrmE_N"/>
    <property type="match status" value="1"/>
</dbReference>
<dbReference type="FunFam" id="3.30.1360.120:FF:000001">
    <property type="entry name" value="tRNA modification GTPase MnmE"/>
    <property type="match status" value="1"/>
</dbReference>
<dbReference type="FunFam" id="3.40.50.300:FF:000249">
    <property type="entry name" value="tRNA modification GTPase MnmE"/>
    <property type="match status" value="1"/>
</dbReference>
<dbReference type="Gene3D" id="3.40.50.300">
    <property type="entry name" value="P-loop containing nucleotide triphosphate hydrolases"/>
    <property type="match status" value="1"/>
</dbReference>
<dbReference type="Gene3D" id="3.30.1360.120">
    <property type="entry name" value="Probable tRNA modification gtpase trme, domain 1"/>
    <property type="match status" value="1"/>
</dbReference>
<dbReference type="Gene3D" id="1.20.120.430">
    <property type="entry name" value="tRNA modification GTPase MnmE domain 2"/>
    <property type="match status" value="1"/>
</dbReference>
<dbReference type="HAMAP" id="MF_00379">
    <property type="entry name" value="GTPase_MnmE"/>
    <property type="match status" value="1"/>
</dbReference>
<dbReference type="InterPro" id="IPR031168">
    <property type="entry name" value="G_TrmE"/>
</dbReference>
<dbReference type="InterPro" id="IPR006073">
    <property type="entry name" value="GTP-bd"/>
</dbReference>
<dbReference type="InterPro" id="IPR018948">
    <property type="entry name" value="GTP-bd_TrmE_N"/>
</dbReference>
<dbReference type="InterPro" id="IPR004520">
    <property type="entry name" value="GTPase_MnmE"/>
</dbReference>
<dbReference type="InterPro" id="IPR027368">
    <property type="entry name" value="MnmE_dom2"/>
</dbReference>
<dbReference type="InterPro" id="IPR025867">
    <property type="entry name" value="MnmE_helical"/>
</dbReference>
<dbReference type="InterPro" id="IPR027417">
    <property type="entry name" value="P-loop_NTPase"/>
</dbReference>
<dbReference type="InterPro" id="IPR005225">
    <property type="entry name" value="Small_GTP-bd"/>
</dbReference>
<dbReference type="InterPro" id="IPR027266">
    <property type="entry name" value="TrmE/GcvT_dom1"/>
</dbReference>
<dbReference type="NCBIfam" id="TIGR00450">
    <property type="entry name" value="mnmE_trmE_thdF"/>
    <property type="match status" value="1"/>
</dbReference>
<dbReference type="NCBIfam" id="NF003661">
    <property type="entry name" value="PRK05291.1-3"/>
    <property type="match status" value="1"/>
</dbReference>
<dbReference type="NCBIfam" id="TIGR00231">
    <property type="entry name" value="small_GTP"/>
    <property type="match status" value="1"/>
</dbReference>
<dbReference type="PANTHER" id="PTHR42714">
    <property type="entry name" value="TRNA MODIFICATION GTPASE GTPBP3"/>
    <property type="match status" value="1"/>
</dbReference>
<dbReference type="PANTHER" id="PTHR42714:SF2">
    <property type="entry name" value="TRNA MODIFICATION GTPASE GTPBP3, MITOCHONDRIAL"/>
    <property type="match status" value="1"/>
</dbReference>
<dbReference type="Pfam" id="PF01926">
    <property type="entry name" value="MMR_HSR1"/>
    <property type="match status" value="1"/>
</dbReference>
<dbReference type="Pfam" id="PF12631">
    <property type="entry name" value="MnmE_helical"/>
    <property type="match status" value="1"/>
</dbReference>
<dbReference type="Pfam" id="PF10396">
    <property type="entry name" value="TrmE_N"/>
    <property type="match status" value="1"/>
</dbReference>
<dbReference type="SUPFAM" id="SSF52540">
    <property type="entry name" value="P-loop containing nucleoside triphosphate hydrolases"/>
    <property type="match status" value="1"/>
</dbReference>
<dbReference type="SUPFAM" id="SSF116878">
    <property type="entry name" value="TrmE connector domain"/>
    <property type="match status" value="1"/>
</dbReference>
<dbReference type="PROSITE" id="PS51709">
    <property type="entry name" value="G_TRME"/>
    <property type="match status" value="1"/>
</dbReference>
<keyword id="KW-0963">Cytoplasm</keyword>
<keyword id="KW-0342">GTP-binding</keyword>
<keyword id="KW-0378">Hydrolase</keyword>
<keyword id="KW-0460">Magnesium</keyword>
<keyword id="KW-0479">Metal-binding</keyword>
<keyword id="KW-0547">Nucleotide-binding</keyword>
<keyword id="KW-0630">Potassium</keyword>
<keyword id="KW-1185">Reference proteome</keyword>
<keyword id="KW-0819">tRNA processing</keyword>
<name>MNME_SHESH</name>